<dbReference type="PIR" id="A42794">
    <property type="entry name" value="A42794"/>
</dbReference>
<dbReference type="SMR" id="P28317"/>
<dbReference type="GO" id="GO:0005576">
    <property type="term" value="C:extracellular region"/>
    <property type="evidence" value="ECO:0007669"/>
    <property type="project" value="UniProtKB-SubCell"/>
</dbReference>
<dbReference type="GO" id="GO:0005509">
    <property type="term" value="F:calcium ion binding"/>
    <property type="evidence" value="ECO:0007669"/>
    <property type="project" value="InterPro"/>
</dbReference>
<dbReference type="GO" id="GO:0005179">
    <property type="term" value="F:hormone activity"/>
    <property type="evidence" value="ECO:0000250"/>
    <property type="project" value="UniProtKB"/>
</dbReference>
<dbReference type="GO" id="GO:0046848">
    <property type="term" value="F:hydroxyapatite binding"/>
    <property type="evidence" value="ECO:0007669"/>
    <property type="project" value="TreeGrafter"/>
</dbReference>
<dbReference type="GO" id="GO:0008147">
    <property type="term" value="F:structural constituent of bone"/>
    <property type="evidence" value="ECO:0000250"/>
    <property type="project" value="UniProtKB"/>
</dbReference>
<dbReference type="GO" id="GO:0031214">
    <property type="term" value="P:biomineral tissue development"/>
    <property type="evidence" value="ECO:0007669"/>
    <property type="project" value="UniProtKB-KW"/>
</dbReference>
<dbReference type="GO" id="GO:0060348">
    <property type="term" value="P:bone development"/>
    <property type="evidence" value="ECO:0007669"/>
    <property type="project" value="InterPro"/>
</dbReference>
<dbReference type="GO" id="GO:0032869">
    <property type="term" value="P:cellular response to insulin stimulus"/>
    <property type="evidence" value="ECO:0000250"/>
    <property type="project" value="UniProtKB"/>
</dbReference>
<dbReference type="GO" id="GO:0042593">
    <property type="term" value="P:glucose homeostasis"/>
    <property type="evidence" value="ECO:0000250"/>
    <property type="project" value="UniProtKB"/>
</dbReference>
<dbReference type="GO" id="GO:1903011">
    <property type="term" value="P:negative regulation of bone development"/>
    <property type="evidence" value="ECO:0000250"/>
    <property type="project" value="UniProtKB"/>
</dbReference>
<dbReference type="GO" id="GO:0001649">
    <property type="term" value="P:osteoblast differentiation"/>
    <property type="evidence" value="ECO:0007669"/>
    <property type="project" value="TreeGrafter"/>
</dbReference>
<dbReference type="GO" id="GO:1900076">
    <property type="term" value="P:regulation of cellular response to insulin stimulus"/>
    <property type="evidence" value="ECO:0007669"/>
    <property type="project" value="InterPro"/>
</dbReference>
<dbReference type="GO" id="GO:0032571">
    <property type="term" value="P:response to vitamin K"/>
    <property type="evidence" value="ECO:0007669"/>
    <property type="project" value="InterPro"/>
</dbReference>
<dbReference type="GO" id="GO:0044342">
    <property type="term" value="P:type B pancreatic cell proliferation"/>
    <property type="evidence" value="ECO:0000250"/>
    <property type="project" value="UniProtKB"/>
</dbReference>
<dbReference type="InterPro" id="IPR035972">
    <property type="entry name" value="GLA-like_dom_SF"/>
</dbReference>
<dbReference type="InterPro" id="IPR000294">
    <property type="entry name" value="GLA_domain"/>
</dbReference>
<dbReference type="InterPro" id="IPR039176">
    <property type="entry name" value="Osteocalcin"/>
</dbReference>
<dbReference type="PANTHER" id="PTHR14235">
    <property type="entry name" value="OSTEOCALCIN"/>
    <property type="match status" value="1"/>
</dbReference>
<dbReference type="PANTHER" id="PTHR14235:SF0">
    <property type="entry name" value="OSTEOCALCIN"/>
    <property type="match status" value="1"/>
</dbReference>
<dbReference type="SUPFAM" id="SSF57630">
    <property type="entry name" value="GLA-domain"/>
    <property type="match status" value="1"/>
</dbReference>
<dbReference type="PROSITE" id="PS00011">
    <property type="entry name" value="GLA_1"/>
    <property type="match status" value="1"/>
</dbReference>
<dbReference type="PROSITE" id="PS50998">
    <property type="entry name" value="GLA_2"/>
    <property type="match status" value="1"/>
</dbReference>
<proteinExistence type="evidence at protein level"/>
<gene>
    <name type="primary">bglap</name>
</gene>
<sequence length="45" mass="4871">AAGELTLTQLESLREVCEANLACEDMMDAQGIIAAYTAYYGPIPY</sequence>
<keyword id="KW-0091">Biomineralization</keyword>
<keyword id="KW-0106">Calcium</keyword>
<keyword id="KW-0903">Direct protein sequencing</keyword>
<keyword id="KW-1015">Disulfide bond</keyword>
<keyword id="KW-0301">Gamma-carboxyglutamic acid</keyword>
<keyword id="KW-0372">Hormone</keyword>
<keyword id="KW-0479">Metal-binding</keyword>
<keyword id="KW-0964">Secreted</keyword>
<comment type="function">
    <text evidence="2">The carboxylated form is one of the main organic components of the bone matrix, which constitutes 1-2% of the total bone protein (By similarity). The carboxylated form binds strongly to apatite and calcium (By similarity).</text>
</comment>
<comment type="subcellular location">
    <subcellularLocation>
        <location evidence="4">Secreted</location>
    </subcellularLocation>
</comment>
<comment type="tissue specificity">
    <text evidence="4">Also found in smaller quantities in dentin.</text>
</comment>
<comment type="PTM">
    <text evidence="3 4">Gamma-carboxyglutamate residues are formed by vitamin K dependent carboxylation by GGCX. These residues are essential for the binding of calcium.</text>
</comment>
<comment type="similarity">
    <text evidence="5">Belongs to the osteocalcin/matrix Gla protein family.</text>
</comment>
<organism>
    <name type="scientific">Lepomis macrochirus</name>
    <name type="common">Bluegill</name>
    <name type="synonym">Eupomotis macrochirus</name>
    <dbReference type="NCBI Taxonomy" id="13106"/>
    <lineage>
        <taxon>Eukaryota</taxon>
        <taxon>Metazoa</taxon>
        <taxon>Chordata</taxon>
        <taxon>Craniata</taxon>
        <taxon>Vertebrata</taxon>
        <taxon>Euteleostomi</taxon>
        <taxon>Actinopterygii</taxon>
        <taxon>Neopterygii</taxon>
        <taxon>Teleostei</taxon>
        <taxon>Neoteleostei</taxon>
        <taxon>Acanthomorphata</taxon>
        <taxon>Eupercaria</taxon>
        <taxon>Centrarchiformes</taxon>
        <taxon>Centrarchoidei</taxon>
        <taxon>Centrarchidae</taxon>
        <taxon>Lepomis</taxon>
    </lineage>
</organism>
<accession>P28317</accession>
<protein>
    <recommendedName>
        <fullName>Osteocalcin</fullName>
    </recommendedName>
    <alternativeName>
        <fullName>Bone Gla protein</fullName>
        <shortName>BGP</shortName>
    </alternativeName>
    <alternativeName>
        <fullName>Gamma-carboxyglutamic acid-containing protein</fullName>
    </alternativeName>
</protein>
<name>OSTCN_LEPMA</name>
<evidence type="ECO:0000250" key="1">
    <source>
        <dbReference type="UniProtKB" id="P02820"/>
    </source>
</evidence>
<evidence type="ECO:0000250" key="2">
    <source>
        <dbReference type="UniProtKB" id="P86546"/>
    </source>
</evidence>
<evidence type="ECO:0000255" key="3">
    <source>
        <dbReference type="PROSITE-ProRule" id="PRU00463"/>
    </source>
</evidence>
<evidence type="ECO:0000269" key="4">
    <source>
    </source>
</evidence>
<evidence type="ECO:0000305" key="5"/>
<reference key="1">
    <citation type="journal article" date="1992" name="J. Biol. Chem.">
        <title>Discovery of bone gamma-carboxyglutamic acid protein in mineralized scales. The abundance and structure of Lepomis macrochirus bone gamma-carboxyglutamic acid protein.</title>
        <authorList>
            <person name="Nishimoto S.K."/>
            <person name="Araki N."/>
            <person name="Robinson F.D."/>
            <person name="Waite J.H."/>
        </authorList>
    </citation>
    <scope>PROTEIN SEQUENCE</scope>
    <scope>SUBCELLULAR LOCATION</scope>
    <scope>GAMMA-CARBOXYGLUTAMATION AT GLU-11; GLU-15 AND GLU-18</scope>
    <source>
        <tissue>Scale</tissue>
    </source>
</reference>
<feature type="chain" id="PRO_0000148910" description="Osteocalcin">
    <location>
        <begin position="1"/>
        <end position="45"/>
    </location>
</feature>
<feature type="domain" description="Gla" evidence="3">
    <location>
        <begin position="1"/>
        <end position="41"/>
    </location>
</feature>
<feature type="binding site" evidence="1">
    <location>
        <position position="11"/>
    </location>
    <ligand>
        <name>Ca(2+)</name>
        <dbReference type="ChEBI" id="CHEBI:29108"/>
        <label>1</label>
    </ligand>
</feature>
<feature type="binding site" evidence="1">
    <location>
        <position position="15"/>
    </location>
    <ligand>
        <name>Ca(2+)</name>
        <dbReference type="ChEBI" id="CHEBI:29108"/>
        <label>2</label>
    </ligand>
</feature>
<feature type="binding site" evidence="1">
    <location>
        <position position="18"/>
    </location>
    <ligand>
        <name>Ca(2+)</name>
        <dbReference type="ChEBI" id="CHEBI:29108"/>
        <label>2</label>
    </ligand>
</feature>
<feature type="binding site" evidence="1">
    <location>
        <position position="18"/>
    </location>
    <ligand>
        <name>Ca(2+)</name>
        <dbReference type="ChEBI" id="CHEBI:29108"/>
        <label>3</label>
    </ligand>
</feature>
<feature type="binding site" evidence="1">
    <location>
        <position position="24"/>
    </location>
    <ligand>
        <name>Ca(2+)</name>
        <dbReference type="ChEBI" id="CHEBI:29108"/>
        <label>3</label>
    </ligand>
</feature>
<feature type="modified residue" description="4-carboxyglutamate" evidence="3 4">
    <location>
        <position position="11"/>
    </location>
</feature>
<feature type="modified residue" description="4-carboxyglutamate" evidence="3 4">
    <location>
        <position position="15"/>
    </location>
</feature>
<feature type="modified residue" description="4-carboxyglutamate" evidence="3 4">
    <location>
        <position position="18"/>
    </location>
</feature>
<feature type="disulfide bond" evidence="3">
    <location>
        <begin position="17"/>
        <end position="23"/>
    </location>
</feature>